<name>RL37_PYRFU</name>
<dbReference type="EMBL" id="AE009950">
    <property type="protein sequence ID" value="AAL81665.1"/>
    <property type="molecule type" value="Genomic_DNA"/>
</dbReference>
<dbReference type="RefSeq" id="WP_014835439.1">
    <property type="nucleotide sequence ID" value="NZ_CP023154.1"/>
</dbReference>
<dbReference type="PDB" id="4V4N">
    <property type="method" value="EM"/>
    <property type="resolution" value="9.00 A"/>
    <property type="chains" value="e=1-62"/>
</dbReference>
<dbReference type="PDB" id="4V6U">
    <property type="method" value="EM"/>
    <property type="resolution" value="6.60 A"/>
    <property type="chains" value="Be=1-62"/>
</dbReference>
<dbReference type="PDBsum" id="4V4N"/>
<dbReference type="PDBsum" id="4V6U"/>
<dbReference type="SMR" id="Q8U0P5"/>
<dbReference type="STRING" id="186497.PF1541"/>
<dbReference type="PaxDb" id="186497-PF1541"/>
<dbReference type="KEGG" id="pfu:PF1541"/>
<dbReference type="PATRIC" id="fig|186497.12.peg.1607"/>
<dbReference type="eggNOG" id="arCOG04126">
    <property type="taxonomic scope" value="Archaea"/>
</dbReference>
<dbReference type="HOGENOM" id="CLU_208825_0_0_2"/>
<dbReference type="OrthoDB" id="5619at2157"/>
<dbReference type="PhylomeDB" id="Q8U0P5"/>
<dbReference type="Proteomes" id="UP000001013">
    <property type="component" value="Chromosome"/>
</dbReference>
<dbReference type="GO" id="GO:0022625">
    <property type="term" value="C:cytosolic large ribosomal subunit"/>
    <property type="evidence" value="ECO:0007669"/>
    <property type="project" value="TreeGrafter"/>
</dbReference>
<dbReference type="GO" id="GO:0019843">
    <property type="term" value="F:rRNA binding"/>
    <property type="evidence" value="ECO:0007669"/>
    <property type="project" value="UniProtKB-KW"/>
</dbReference>
<dbReference type="GO" id="GO:0003735">
    <property type="term" value="F:structural constituent of ribosome"/>
    <property type="evidence" value="ECO:0007669"/>
    <property type="project" value="InterPro"/>
</dbReference>
<dbReference type="GO" id="GO:0008270">
    <property type="term" value="F:zinc ion binding"/>
    <property type="evidence" value="ECO:0007669"/>
    <property type="project" value="UniProtKB-UniRule"/>
</dbReference>
<dbReference type="GO" id="GO:0006412">
    <property type="term" value="P:translation"/>
    <property type="evidence" value="ECO:0007669"/>
    <property type="project" value="UniProtKB-UniRule"/>
</dbReference>
<dbReference type="FunFam" id="2.20.25.30:FF:000003">
    <property type="entry name" value="50S ribosomal protein L37e"/>
    <property type="match status" value="1"/>
</dbReference>
<dbReference type="Gene3D" id="2.20.25.30">
    <property type="match status" value="1"/>
</dbReference>
<dbReference type="HAMAP" id="MF_00547">
    <property type="entry name" value="Ribosomal_eL37"/>
    <property type="match status" value="1"/>
</dbReference>
<dbReference type="InterPro" id="IPR001569">
    <property type="entry name" value="Ribosomal_eL37"/>
</dbReference>
<dbReference type="InterPro" id="IPR011331">
    <property type="entry name" value="Ribosomal_eL37/eL43"/>
</dbReference>
<dbReference type="InterPro" id="IPR018267">
    <property type="entry name" value="Ribosomal_eL37_CS"/>
</dbReference>
<dbReference type="InterPro" id="IPR011332">
    <property type="entry name" value="Ribosomal_zn-bd"/>
</dbReference>
<dbReference type="NCBIfam" id="NF003214">
    <property type="entry name" value="PRK04179.1"/>
    <property type="match status" value="1"/>
</dbReference>
<dbReference type="PANTHER" id="PTHR10768">
    <property type="entry name" value="60S RIBOSOMAL PROTEIN L37"/>
    <property type="match status" value="1"/>
</dbReference>
<dbReference type="PANTHER" id="PTHR10768:SF0">
    <property type="entry name" value="RIBOSOMAL PROTEIN L37"/>
    <property type="match status" value="1"/>
</dbReference>
<dbReference type="Pfam" id="PF01907">
    <property type="entry name" value="Ribosomal_L37e"/>
    <property type="match status" value="1"/>
</dbReference>
<dbReference type="SUPFAM" id="SSF57829">
    <property type="entry name" value="Zn-binding ribosomal proteins"/>
    <property type="match status" value="1"/>
</dbReference>
<dbReference type="PROSITE" id="PS01077">
    <property type="entry name" value="RIBOSOMAL_L37E"/>
    <property type="match status" value="1"/>
</dbReference>
<sequence length="62" mass="7223">MGSGTATFGKRNSTPTHIRCRRCGRVSYNVKKGYCAACGFGRSRRLRKYRWSKKWKKKKNAH</sequence>
<organism>
    <name type="scientific">Pyrococcus furiosus (strain ATCC 43587 / DSM 3638 / JCM 8422 / Vc1)</name>
    <dbReference type="NCBI Taxonomy" id="186497"/>
    <lineage>
        <taxon>Archaea</taxon>
        <taxon>Methanobacteriati</taxon>
        <taxon>Methanobacteriota</taxon>
        <taxon>Thermococci</taxon>
        <taxon>Thermococcales</taxon>
        <taxon>Thermococcaceae</taxon>
        <taxon>Pyrococcus</taxon>
    </lineage>
</organism>
<comment type="function">
    <text evidence="1">Binds to the 23S rRNA.</text>
</comment>
<comment type="cofactor">
    <cofactor evidence="1">
        <name>Zn(2+)</name>
        <dbReference type="ChEBI" id="CHEBI:29105"/>
    </cofactor>
    <text evidence="1">Binds 1 zinc ion per subunit.</text>
</comment>
<comment type="subunit">
    <text evidence="2">Part of the 50S ribosomal subunit.</text>
</comment>
<comment type="similarity">
    <text evidence="1">Belongs to the eukaryotic ribosomal protein eL37 family.</text>
</comment>
<feature type="chain" id="PRO_0000139735" description="Large ribosomal subunit protein eL37">
    <location>
        <begin position="1"/>
        <end position="62"/>
    </location>
</feature>
<feature type="zinc finger region" description="C4-type" evidence="1">
    <location>
        <begin position="20"/>
        <end position="38"/>
    </location>
</feature>
<feature type="binding site" evidence="1">
    <location>
        <position position="20"/>
    </location>
    <ligand>
        <name>Zn(2+)</name>
        <dbReference type="ChEBI" id="CHEBI:29105"/>
    </ligand>
</feature>
<feature type="binding site" evidence="1">
    <location>
        <position position="23"/>
    </location>
    <ligand>
        <name>Zn(2+)</name>
        <dbReference type="ChEBI" id="CHEBI:29105"/>
    </ligand>
</feature>
<feature type="binding site" evidence="1">
    <location>
        <position position="35"/>
    </location>
    <ligand>
        <name>Zn(2+)</name>
        <dbReference type="ChEBI" id="CHEBI:29105"/>
    </ligand>
</feature>
<feature type="binding site" evidence="1">
    <location>
        <position position="38"/>
    </location>
    <ligand>
        <name>Zn(2+)</name>
        <dbReference type="ChEBI" id="CHEBI:29105"/>
    </ligand>
</feature>
<gene>
    <name evidence="1" type="primary">rpl37e</name>
    <name type="ordered locus">PF1541</name>
</gene>
<reference key="1">
    <citation type="journal article" date="1999" name="Genetics">
        <title>Divergence of the hyperthermophilic archaea Pyrococcus furiosus and P. horikoshii inferred from complete genomic sequences.</title>
        <authorList>
            <person name="Maeder D.L."/>
            <person name="Weiss R.B."/>
            <person name="Dunn D.M."/>
            <person name="Cherry J.L."/>
            <person name="Gonzalez J.M."/>
            <person name="DiRuggiero J."/>
            <person name="Robb F.T."/>
        </authorList>
    </citation>
    <scope>NUCLEOTIDE SEQUENCE [LARGE SCALE GENOMIC DNA]</scope>
    <source>
        <strain>ATCC 43587 / DSM 3638 / JCM 8422 / Vc1</strain>
    </source>
</reference>
<reference evidence="3" key="2">
    <citation type="journal article" date="2013" name="Nucleic Acids Res.">
        <title>Promiscuous behaviour of archaeal ribosomal proteins: implications for eukaryotic ribosome evolution.</title>
        <authorList>
            <person name="Armache J.P."/>
            <person name="Anger A.M."/>
            <person name="Marquez V."/>
            <person name="Franckenberg S."/>
            <person name="Frohlich T."/>
            <person name="Villa E."/>
            <person name="Berninghausen O."/>
            <person name="Thomm M."/>
            <person name="Arnold G.J."/>
            <person name="Beckmann R."/>
            <person name="Wilson D.N."/>
        </authorList>
    </citation>
    <scope>STRUCTURE BY ELECTRON MICROSCOPY (6.60 ANGSTROMS) IN THE 70S RIBOSOME</scope>
    <scope>SUBUNIT</scope>
</reference>
<keyword id="KW-0002">3D-structure</keyword>
<keyword id="KW-0479">Metal-binding</keyword>
<keyword id="KW-1185">Reference proteome</keyword>
<keyword id="KW-0687">Ribonucleoprotein</keyword>
<keyword id="KW-0689">Ribosomal protein</keyword>
<keyword id="KW-0694">RNA-binding</keyword>
<keyword id="KW-0699">rRNA-binding</keyword>
<keyword id="KW-0862">Zinc</keyword>
<keyword id="KW-0863">Zinc-finger</keyword>
<accession>Q8U0P5</accession>
<protein>
    <recommendedName>
        <fullName evidence="1">Large ribosomal subunit protein eL37</fullName>
    </recommendedName>
    <alternativeName>
        <fullName>50S ribosomal protein L37e</fullName>
    </alternativeName>
</protein>
<evidence type="ECO:0000255" key="1">
    <source>
        <dbReference type="HAMAP-Rule" id="MF_00547"/>
    </source>
</evidence>
<evidence type="ECO:0000269" key="2">
    <source>
    </source>
</evidence>
<evidence type="ECO:0007744" key="3">
    <source>
        <dbReference type="PDB" id="4V6U"/>
    </source>
</evidence>
<proteinExistence type="evidence at protein level"/>